<feature type="chain" id="PRO_0000197880" description="Exodeoxyribonuclease 7 large subunit">
    <location>
        <begin position="1"/>
        <end position="445"/>
    </location>
</feature>
<comment type="function">
    <text evidence="1">Bidirectionally degrades single-stranded DNA into large acid-insoluble oligonucleotides, which are then degraded further into small acid-soluble oligonucleotides.</text>
</comment>
<comment type="catalytic activity">
    <reaction evidence="1">
        <text>Exonucleolytic cleavage in either 5'- to 3'- or 3'- to 5'-direction to yield nucleoside 5'-phosphates.</text>
        <dbReference type="EC" id="3.1.11.6"/>
    </reaction>
</comment>
<comment type="subunit">
    <text evidence="1">Heterooligomer composed of large and small subunits.</text>
</comment>
<comment type="subcellular location">
    <subcellularLocation>
        <location evidence="1">Cytoplasm</location>
    </subcellularLocation>
</comment>
<comment type="similarity">
    <text evidence="1">Belongs to the XseA family.</text>
</comment>
<organism>
    <name type="scientific">Staphylococcus aureus (strain MRSA252)</name>
    <dbReference type="NCBI Taxonomy" id="282458"/>
    <lineage>
        <taxon>Bacteria</taxon>
        <taxon>Bacillati</taxon>
        <taxon>Bacillota</taxon>
        <taxon>Bacilli</taxon>
        <taxon>Bacillales</taxon>
        <taxon>Staphylococcaceae</taxon>
        <taxon>Staphylococcus</taxon>
    </lineage>
</organism>
<accession>Q6GGH5</accession>
<reference key="1">
    <citation type="journal article" date="2004" name="Proc. Natl. Acad. Sci. U.S.A.">
        <title>Complete genomes of two clinical Staphylococcus aureus strains: evidence for the rapid evolution of virulence and drug resistance.</title>
        <authorList>
            <person name="Holden M.T.G."/>
            <person name="Feil E.J."/>
            <person name="Lindsay J.A."/>
            <person name="Peacock S.J."/>
            <person name="Day N.P.J."/>
            <person name="Enright M.C."/>
            <person name="Foster T.J."/>
            <person name="Moore C.E."/>
            <person name="Hurst L."/>
            <person name="Atkin R."/>
            <person name="Barron A."/>
            <person name="Bason N."/>
            <person name="Bentley S.D."/>
            <person name="Chillingworth C."/>
            <person name="Chillingworth T."/>
            <person name="Churcher C."/>
            <person name="Clark L."/>
            <person name="Corton C."/>
            <person name="Cronin A."/>
            <person name="Doggett J."/>
            <person name="Dowd L."/>
            <person name="Feltwell T."/>
            <person name="Hance Z."/>
            <person name="Harris B."/>
            <person name="Hauser H."/>
            <person name="Holroyd S."/>
            <person name="Jagels K."/>
            <person name="James K.D."/>
            <person name="Lennard N."/>
            <person name="Line A."/>
            <person name="Mayes R."/>
            <person name="Moule S."/>
            <person name="Mungall K."/>
            <person name="Ormond D."/>
            <person name="Quail M.A."/>
            <person name="Rabbinowitsch E."/>
            <person name="Rutherford K.M."/>
            <person name="Sanders M."/>
            <person name="Sharp S."/>
            <person name="Simmonds M."/>
            <person name="Stevens K."/>
            <person name="Whitehead S."/>
            <person name="Barrell B.G."/>
            <person name="Spratt B.G."/>
            <person name="Parkhill J."/>
        </authorList>
    </citation>
    <scope>NUCLEOTIDE SEQUENCE [LARGE SCALE GENOMIC DNA]</scope>
    <source>
        <strain>MRSA252</strain>
    </source>
</reference>
<gene>
    <name evidence="1" type="primary">xseA</name>
    <name type="ordered locus">SAR1601</name>
</gene>
<proteinExistence type="inferred from homology"/>
<keyword id="KW-0963">Cytoplasm</keyword>
<keyword id="KW-0269">Exonuclease</keyword>
<keyword id="KW-0378">Hydrolase</keyword>
<keyword id="KW-0540">Nuclease</keyword>
<protein>
    <recommendedName>
        <fullName evidence="1">Exodeoxyribonuclease 7 large subunit</fullName>
        <ecNumber evidence="1">3.1.11.6</ecNumber>
    </recommendedName>
    <alternativeName>
        <fullName evidence="1">Exodeoxyribonuclease VII large subunit</fullName>
        <shortName evidence="1">Exonuclease VII large subunit</shortName>
    </alternativeName>
</protein>
<evidence type="ECO:0000255" key="1">
    <source>
        <dbReference type="HAMAP-Rule" id="MF_00378"/>
    </source>
</evidence>
<sequence>MSDYLSVSALTKYIKYKFDQDPHLQSVLIKGELSNFKKHSSGHLYFNVKDKESVISAMMFKGSASKLNFEPKEGDEVLLEARVSVFERRGNYQIYVNKMQLDGIGNLYQKLEALKKKLTEEGCFDKANKKSIPKFPKKIAVLTASTGAAIRDIHSTINSRFPLAEQIQISTLVQGEKAKDDIIEKIEYADSLGVDTIIVGRGGGSIEDLWNFNEEAVVRAIYNCKTPIISAVGHETDFTLSDFAADIRAATPTQAAVIATPDQYELLQQIQQYQFTLTRFIKKHLEQQRKHVEHLSSYYKFKQPTLLYDQQIQRRDDLEKRLKQQIQATFEQQRHRLMLLQQRYNLKALLSSVNQEQQNNLQLTNQLVKLLNSKILSYKNDLKNKVENLNNLSPTNTMLRGYAIVNKKDEVITSTKDLTENDQLTLTMKDGLVDAKVTKVRCNND</sequence>
<name>EX7L_STAAR</name>
<dbReference type="EC" id="3.1.11.6" evidence="1"/>
<dbReference type="EMBL" id="BX571856">
    <property type="protein sequence ID" value="CAG40596.1"/>
    <property type="molecule type" value="Genomic_DNA"/>
</dbReference>
<dbReference type="RefSeq" id="WP_001286928.1">
    <property type="nucleotide sequence ID" value="NC_002952.2"/>
</dbReference>
<dbReference type="SMR" id="Q6GGH5"/>
<dbReference type="KEGG" id="sar:SAR1601"/>
<dbReference type="HOGENOM" id="CLU_023625_3_1_9"/>
<dbReference type="Proteomes" id="UP000000596">
    <property type="component" value="Chromosome"/>
</dbReference>
<dbReference type="GO" id="GO:0005737">
    <property type="term" value="C:cytoplasm"/>
    <property type="evidence" value="ECO:0007669"/>
    <property type="project" value="UniProtKB-SubCell"/>
</dbReference>
<dbReference type="GO" id="GO:0009318">
    <property type="term" value="C:exodeoxyribonuclease VII complex"/>
    <property type="evidence" value="ECO:0007669"/>
    <property type="project" value="InterPro"/>
</dbReference>
<dbReference type="GO" id="GO:0008855">
    <property type="term" value="F:exodeoxyribonuclease VII activity"/>
    <property type="evidence" value="ECO:0007669"/>
    <property type="project" value="UniProtKB-UniRule"/>
</dbReference>
<dbReference type="GO" id="GO:0003676">
    <property type="term" value="F:nucleic acid binding"/>
    <property type="evidence" value="ECO:0007669"/>
    <property type="project" value="InterPro"/>
</dbReference>
<dbReference type="GO" id="GO:0006308">
    <property type="term" value="P:DNA catabolic process"/>
    <property type="evidence" value="ECO:0007669"/>
    <property type="project" value="UniProtKB-UniRule"/>
</dbReference>
<dbReference type="CDD" id="cd04489">
    <property type="entry name" value="ExoVII_LU_OBF"/>
    <property type="match status" value="1"/>
</dbReference>
<dbReference type="HAMAP" id="MF_00378">
    <property type="entry name" value="Exonuc_7_L"/>
    <property type="match status" value="1"/>
</dbReference>
<dbReference type="InterPro" id="IPR003753">
    <property type="entry name" value="Exonuc_VII_L"/>
</dbReference>
<dbReference type="InterPro" id="IPR020579">
    <property type="entry name" value="Exonuc_VII_lsu_C"/>
</dbReference>
<dbReference type="InterPro" id="IPR025824">
    <property type="entry name" value="OB-fold_nuc-bd_dom"/>
</dbReference>
<dbReference type="NCBIfam" id="TIGR00237">
    <property type="entry name" value="xseA"/>
    <property type="match status" value="1"/>
</dbReference>
<dbReference type="PANTHER" id="PTHR30008">
    <property type="entry name" value="EXODEOXYRIBONUCLEASE 7 LARGE SUBUNIT"/>
    <property type="match status" value="1"/>
</dbReference>
<dbReference type="PANTHER" id="PTHR30008:SF0">
    <property type="entry name" value="EXODEOXYRIBONUCLEASE 7 LARGE SUBUNIT"/>
    <property type="match status" value="1"/>
</dbReference>
<dbReference type="Pfam" id="PF02601">
    <property type="entry name" value="Exonuc_VII_L"/>
    <property type="match status" value="1"/>
</dbReference>
<dbReference type="Pfam" id="PF13742">
    <property type="entry name" value="tRNA_anti_2"/>
    <property type="match status" value="1"/>
</dbReference>